<keyword id="KW-1185">Reference proteome</keyword>
<keyword id="KW-0687">Ribonucleoprotein</keyword>
<keyword id="KW-0689">Ribosomal protein</keyword>
<accession>B2IT82</accession>
<reference key="1">
    <citation type="journal article" date="2013" name="Plant Physiol.">
        <title>A Nostoc punctiforme Sugar Transporter Necessary to Establish a Cyanobacterium-Plant Symbiosis.</title>
        <authorList>
            <person name="Ekman M."/>
            <person name="Picossi S."/>
            <person name="Campbell E.L."/>
            <person name="Meeks J.C."/>
            <person name="Flores E."/>
        </authorList>
    </citation>
    <scope>NUCLEOTIDE SEQUENCE [LARGE SCALE GENOMIC DNA]</scope>
    <source>
        <strain>ATCC 29133 / PCC 73102</strain>
    </source>
</reference>
<comment type="similarity">
    <text evidence="1">Belongs to the bacterial ribosomal protein bL32 family.</text>
</comment>
<feature type="chain" id="PRO_1000120150" description="Large ribosomal subunit protein bL32">
    <location>
        <begin position="1"/>
        <end position="57"/>
    </location>
</feature>
<feature type="region of interest" description="Disordered" evidence="2">
    <location>
        <begin position="1"/>
        <end position="22"/>
    </location>
</feature>
<gene>
    <name evidence="1" type="primary">rpmF</name>
    <name evidence="1" type="synonym">rpl32</name>
    <name type="ordered locus">Npun_R0842</name>
</gene>
<sequence>MAVPKKKTSKSKRDKRRATWRHKAVVEAQKALSLGKSILTGRSTFVYPTAEEEEEES</sequence>
<dbReference type="EMBL" id="CP001037">
    <property type="protein sequence ID" value="ACC79580.1"/>
    <property type="molecule type" value="Genomic_DNA"/>
</dbReference>
<dbReference type="RefSeq" id="WP_012407602.1">
    <property type="nucleotide sequence ID" value="NC_010628.1"/>
</dbReference>
<dbReference type="SMR" id="B2IT82"/>
<dbReference type="STRING" id="63737.Npun_R0842"/>
<dbReference type="EnsemblBacteria" id="ACC79580">
    <property type="protein sequence ID" value="ACC79580"/>
    <property type="gene ID" value="Npun_R0842"/>
</dbReference>
<dbReference type="KEGG" id="npu:Npun_R0842"/>
<dbReference type="eggNOG" id="COG0333">
    <property type="taxonomic scope" value="Bacteria"/>
</dbReference>
<dbReference type="HOGENOM" id="CLU_199882_0_0_3"/>
<dbReference type="OrthoDB" id="541730at2"/>
<dbReference type="PhylomeDB" id="B2IT82"/>
<dbReference type="Proteomes" id="UP000001191">
    <property type="component" value="Chromosome"/>
</dbReference>
<dbReference type="GO" id="GO:0015934">
    <property type="term" value="C:large ribosomal subunit"/>
    <property type="evidence" value="ECO:0007669"/>
    <property type="project" value="InterPro"/>
</dbReference>
<dbReference type="GO" id="GO:0003735">
    <property type="term" value="F:structural constituent of ribosome"/>
    <property type="evidence" value="ECO:0007669"/>
    <property type="project" value="InterPro"/>
</dbReference>
<dbReference type="GO" id="GO:0006412">
    <property type="term" value="P:translation"/>
    <property type="evidence" value="ECO:0007669"/>
    <property type="project" value="UniProtKB-UniRule"/>
</dbReference>
<dbReference type="Gene3D" id="1.20.5.640">
    <property type="entry name" value="Single helix bin"/>
    <property type="match status" value="1"/>
</dbReference>
<dbReference type="HAMAP" id="MF_00340">
    <property type="entry name" value="Ribosomal_bL32"/>
    <property type="match status" value="1"/>
</dbReference>
<dbReference type="InterPro" id="IPR002677">
    <property type="entry name" value="Ribosomal_bL32"/>
</dbReference>
<dbReference type="InterPro" id="IPR044958">
    <property type="entry name" value="Ribosomal_bL32_plant/cyanobact"/>
</dbReference>
<dbReference type="InterPro" id="IPR011332">
    <property type="entry name" value="Ribosomal_zn-bd"/>
</dbReference>
<dbReference type="NCBIfam" id="TIGR01031">
    <property type="entry name" value="rpmF_bact"/>
    <property type="match status" value="1"/>
</dbReference>
<dbReference type="PANTHER" id="PTHR36083">
    <property type="entry name" value="50S RIBOSOMAL PROTEIN L32, CHLOROPLASTIC"/>
    <property type="match status" value="1"/>
</dbReference>
<dbReference type="PANTHER" id="PTHR36083:SF1">
    <property type="entry name" value="LARGE RIBOSOMAL SUBUNIT PROTEIN BL32C"/>
    <property type="match status" value="1"/>
</dbReference>
<dbReference type="Pfam" id="PF01783">
    <property type="entry name" value="Ribosomal_L32p"/>
    <property type="match status" value="1"/>
</dbReference>
<dbReference type="SUPFAM" id="SSF57829">
    <property type="entry name" value="Zn-binding ribosomal proteins"/>
    <property type="match status" value="1"/>
</dbReference>
<evidence type="ECO:0000255" key="1">
    <source>
        <dbReference type="HAMAP-Rule" id="MF_00340"/>
    </source>
</evidence>
<evidence type="ECO:0000256" key="2">
    <source>
        <dbReference type="SAM" id="MobiDB-lite"/>
    </source>
</evidence>
<evidence type="ECO:0000305" key="3"/>
<proteinExistence type="inferred from homology"/>
<protein>
    <recommendedName>
        <fullName evidence="1">Large ribosomal subunit protein bL32</fullName>
    </recommendedName>
    <alternativeName>
        <fullName evidence="3">50S ribosomal protein L32</fullName>
    </alternativeName>
</protein>
<name>RL32_NOSP7</name>
<organism>
    <name type="scientific">Nostoc punctiforme (strain ATCC 29133 / PCC 73102)</name>
    <dbReference type="NCBI Taxonomy" id="63737"/>
    <lineage>
        <taxon>Bacteria</taxon>
        <taxon>Bacillati</taxon>
        <taxon>Cyanobacteriota</taxon>
        <taxon>Cyanophyceae</taxon>
        <taxon>Nostocales</taxon>
        <taxon>Nostocaceae</taxon>
        <taxon>Nostoc</taxon>
    </lineage>
</organism>